<evidence type="ECO:0000255" key="1">
    <source>
        <dbReference type="HAMAP-Rule" id="MF_00116"/>
    </source>
</evidence>
<accession>Q12SF7</accession>
<reference key="1">
    <citation type="submission" date="2006-03" db="EMBL/GenBank/DDBJ databases">
        <title>Complete sequence of Shewanella denitrificans OS217.</title>
        <authorList>
            <consortium name="US DOE Joint Genome Institute"/>
            <person name="Copeland A."/>
            <person name="Lucas S."/>
            <person name="Lapidus A."/>
            <person name="Barry K."/>
            <person name="Detter J.C."/>
            <person name="Glavina del Rio T."/>
            <person name="Hammon N."/>
            <person name="Israni S."/>
            <person name="Dalin E."/>
            <person name="Tice H."/>
            <person name="Pitluck S."/>
            <person name="Brettin T."/>
            <person name="Bruce D."/>
            <person name="Han C."/>
            <person name="Tapia R."/>
            <person name="Gilna P."/>
            <person name="Kiss H."/>
            <person name="Schmutz J."/>
            <person name="Larimer F."/>
            <person name="Land M."/>
            <person name="Hauser L."/>
            <person name="Kyrpides N."/>
            <person name="Lykidis A."/>
            <person name="Richardson P."/>
        </authorList>
    </citation>
    <scope>NUCLEOTIDE SEQUENCE [LARGE SCALE GENOMIC DNA]</scope>
    <source>
        <strain>OS217 / ATCC BAA-1090 / DSM 15013</strain>
    </source>
</reference>
<protein>
    <recommendedName>
        <fullName evidence="1">Deoxyuridine 5'-triphosphate nucleotidohydrolase</fullName>
        <shortName evidence="1">dUTPase</shortName>
        <ecNumber evidence="1">3.6.1.23</ecNumber>
    </recommendedName>
    <alternativeName>
        <fullName evidence="1">dUTP pyrophosphatase</fullName>
    </alternativeName>
</protein>
<feature type="chain" id="PRO_1000015514" description="Deoxyuridine 5'-triphosphate nucleotidohydrolase">
    <location>
        <begin position="1"/>
        <end position="152"/>
    </location>
</feature>
<feature type="binding site" evidence="1">
    <location>
        <begin position="71"/>
        <end position="73"/>
    </location>
    <ligand>
        <name>substrate</name>
    </ligand>
</feature>
<feature type="binding site" evidence="1">
    <location>
        <position position="84"/>
    </location>
    <ligand>
        <name>substrate</name>
    </ligand>
</feature>
<feature type="binding site" evidence="1">
    <location>
        <begin position="88"/>
        <end position="90"/>
    </location>
    <ligand>
        <name>substrate</name>
    </ligand>
</feature>
<feature type="binding site" evidence="1">
    <location>
        <position position="98"/>
    </location>
    <ligand>
        <name>substrate</name>
    </ligand>
</feature>
<keyword id="KW-0378">Hydrolase</keyword>
<keyword id="KW-0460">Magnesium</keyword>
<keyword id="KW-0479">Metal-binding</keyword>
<keyword id="KW-0546">Nucleotide metabolism</keyword>
<keyword id="KW-1185">Reference proteome</keyword>
<proteinExistence type="inferred from homology"/>
<organism>
    <name type="scientific">Shewanella denitrificans (strain OS217 / ATCC BAA-1090 / DSM 15013)</name>
    <dbReference type="NCBI Taxonomy" id="318161"/>
    <lineage>
        <taxon>Bacteria</taxon>
        <taxon>Pseudomonadati</taxon>
        <taxon>Pseudomonadota</taxon>
        <taxon>Gammaproteobacteria</taxon>
        <taxon>Alteromonadales</taxon>
        <taxon>Shewanellaceae</taxon>
        <taxon>Shewanella</taxon>
    </lineage>
</organism>
<name>DUT_SHEDO</name>
<comment type="function">
    <text evidence="1">This enzyme is involved in nucleotide metabolism: it produces dUMP, the immediate precursor of thymidine nucleotides and it decreases the intracellular concentration of dUTP so that uracil cannot be incorporated into DNA.</text>
</comment>
<comment type="catalytic activity">
    <reaction evidence="1">
        <text>dUTP + H2O = dUMP + diphosphate + H(+)</text>
        <dbReference type="Rhea" id="RHEA:10248"/>
        <dbReference type="ChEBI" id="CHEBI:15377"/>
        <dbReference type="ChEBI" id="CHEBI:15378"/>
        <dbReference type="ChEBI" id="CHEBI:33019"/>
        <dbReference type="ChEBI" id="CHEBI:61555"/>
        <dbReference type="ChEBI" id="CHEBI:246422"/>
        <dbReference type="EC" id="3.6.1.23"/>
    </reaction>
</comment>
<comment type="cofactor">
    <cofactor evidence="1">
        <name>Mg(2+)</name>
        <dbReference type="ChEBI" id="CHEBI:18420"/>
    </cofactor>
</comment>
<comment type="pathway">
    <text evidence="1">Pyrimidine metabolism; dUMP biosynthesis; dUMP from dCTP (dUTP route): step 2/2.</text>
</comment>
<comment type="similarity">
    <text evidence="1">Belongs to the dUTPase family.</text>
</comment>
<sequence>MKTPIEVKILDPRIGTQFPLPAYATPGSAGMDLRAMVDTELTLAPGETKLIPTGIAIHVADPSLAAVILPRSGLGHKHGIVLGNLVGLIDSDYQGPLMVSCWNRSDTPFTLTLGERLAQLVFVPVVQAQFTLVDEFERSDRGEGGFGHSGTQ</sequence>
<dbReference type="EC" id="3.6.1.23" evidence="1"/>
<dbReference type="EMBL" id="CP000302">
    <property type="protein sequence ID" value="ABE53619.1"/>
    <property type="molecule type" value="Genomic_DNA"/>
</dbReference>
<dbReference type="RefSeq" id="WP_011494786.1">
    <property type="nucleotide sequence ID" value="NC_007954.1"/>
</dbReference>
<dbReference type="SMR" id="Q12SF7"/>
<dbReference type="STRING" id="318161.Sden_0324"/>
<dbReference type="KEGG" id="sdn:Sden_0324"/>
<dbReference type="eggNOG" id="COG0756">
    <property type="taxonomic scope" value="Bacteria"/>
</dbReference>
<dbReference type="HOGENOM" id="CLU_068508_1_1_6"/>
<dbReference type="OrthoDB" id="9809956at2"/>
<dbReference type="UniPathway" id="UPA00610">
    <property type="reaction ID" value="UER00666"/>
</dbReference>
<dbReference type="Proteomes" id="UP000001982">
    <property type="component" value="Chromosome"/>
</dbReference>
<dbReference type="GO" id="GO:0004170">
    <property type="term" value="F:dUTP diphosphatase activity"/>
    <property type="evidence" value="ECO:0007669"/>
    <property type="project" value="UniProtKB-UniRule"/>
</dbReference>
<dbReference type="GO" id="GO:0000287">
    <property type="term" value="F:magnesium ion binding"/>
    <property type="evidence" value="ECO:0007669"/>
    <property type="project" value="UniProtKB-UniRule"/>
</dbReference>
<dbReference type="GO" id="GO:0006226">
    <property type="term" value="P:dUMP biosynthetic process"/>
    <property type="evidence" value="ECO:0007669"/>
    <property type="project" value="UniProtKB-UniRule"/>
</dbReference>
<dbReference type="GO" id="GO:0046081">
    <property type="term" value="P:dUTP catabolic process"/>
    <property type="evidence" value="ECO:0007669"/>
    <property type="project" value="InterPro"/>
</dbReference>
<dbReference type="CDD" id="cd07557">
    <property type="entry name" value="trimeric_dUTPase"/>
    <property type="match status" value="1"/>
</dbReference>
<dbReference type="FunFam" id="2.70.40.10:FF:000002">
    <property type="entry name" value="dUTP diphosphatase"/>
    <property type="match status" value="1"/>
</dbReference>
<dbReference type="Gene3D" id="2.70.40.10">
    <property type="match status" value="1"/>
</dbReference>
<dbReference type="HAMAP" id="MF_00116">
    <property type="entry name" value="dUTPase_bact"/>
    <property type="match status" value="1"/>
</dbReference>
<dbReference type="InterPro" id="IPR008181">
    <property type="entry name" value="dUTPase"/>
</dbReference>
<dbReference type="InterPro" id="IPR029054">
    <property type="entry name" value="dUTPase-like"/>
</dbReference>
<dbReference type="InterPro" id="IPR036157">
    <property type="entry name" value="dUTPase-like_sf"/>
</dbReference>
<dbReference type="InterPro" id="IPR033704">
    <property type="entry name" value="dUTPase_trimeric"/>
</dbReference>
<dbReference type="NCBIfam" id="TIGR00576">
    <property type="entry name" value="dut"/>
    <property type="match status" value="1"/>
</dbReference>
<dbReference type="NCBIfam" id="NF001862">
    <property type="entry name" value="PRK00601.1"/>
    <property type="match status" value="1"/>
</dbReference>
<dbReference type="PANTHER" id="PTHR11241">
    <property type="entry name" value="DEOXYURIDINE 5'-TRIPHOSPHATE NUCLEOTIDOHYDROLASE"/>
    <property type="match status" value="1"/>
</dbReference>
<dbReference type="PANTHER" id="PTHR11241:SF0">
    <property type="entry name" value="DEOXYURIDINE 5'-TRIPHOSPHATE NUCLEOTIDOHYDROLASE"/>
    <property type="match status" value="1"/>
</dbReference>
<dbReference type="Pfam" id="PF00692">
    <property type="entry name" value="dUTPase"/>
    <property type="match status" value="1"/>
</dbReference>
<dbReference type="SUPFAM" id="SSF51283">
    <property type="entry name" value="dUTPase-like"/>
    <property type="match status" value="1"/>
</dbReference>
<gene>
    <name evidence="1" type="primary">dut</name>
    <name type="ordered locus">Sden_0324</name>
</gene>